<reference key="1">
    <citation type="journal article" date="2006" name="Proc. Natl. Acad. Sci. U.S.A.">
        <title>The complete genome of Rhodococcus sp. RHA1 provides insights into a catabolic powerhouse.</title>
        <authorList>
            <person name="McLeod M.P."/>
            <person name="Warren R.L."/>
            <person name="Hsiao W.W.L."/>
            <person name="Araki N."/>
            <person name="Myhre M."/>
            <person name="Fernandes C."/>
            <person name="Miyazawa D."/>
            <person name="Wong W."/>
            <person name="Lillquist A.L."/>
            <person name="Wang D."/>
            <person name="Dosanjh M."/>
            <person name="Hara H."/>
            <person name="Petrescu A."/>
            <person name="Morin R.D."/>
            <person name="Yang G."/>
            <person name="Stott J.M."/>
            <person name="Schein J.E."/>
            <person name="Shin H."/>
            <person name="Smailus D."/>
            <person name="Siddiqui A.S."/>
            <person name="Marra M.A."/>
            <person name="Jones S.J.M."/>
            <person name="Holt R."/>
            <person name="Brinkman F.S.L."/>
            <person name="Miyauchi K."/>
            <person name="Fukuda M."/>
            <person name="Davies J.E."/>
            <person name="Mohn W.W."/>
            <person name="Eltis L.D."/>
        </authorList>
    </citation>
    <scope>NUCLEOTIDE SEQUENCE [LARGE SCALE GENOMIC DNA]</scope>
    <source>
        <strain>RHA1</strain>
    </source>
</reference>
<feature type="chain" id="PRO_0000256329" description="Chorismate synthase">
    <location>
        <begin position="1"/>
        <end position="395"/>
    </location>
</feature>
<feature type="region of interest" description="Disordered" evidence="2">
    <location>
        <begin position="272"/>
        <end position="296"/>
    </location>
</feature>
<feature type="compositionally biased region" description="Basic and acidic residues" evidence="2">
    <location>
        <begin position="272"/>
        <end position="283"/>
    </location>
</feature>
<feature type="binding site" evidence="1">
    <location>
        <position position="40"/>
    </location>
    <ligand>
        <name>NADP(+)</name>
        <dbReference type="ChEBI" id="CHEBI:58349"/>
    </ligand>
</feature>
<feature type="binding site" evidence="1">
    <location>
        <position position="46"/>
    </location>
    <ligand>
        <name>NADP(+)</name>
        <dbReference type="ChEBI" id="CHEBI:58349"/>
    </ligand>
</feature>
<feature type="binding site" evidence="1">
    <location>
        <begin position="135"/>
        <end position="137"/>
    </location>
    <ligand>
        <name>FMN</name>
        <dbReference type="ChEBI" id="CHEBI:58210"/>
    </ligand>
</feature>
<feature type="binding site" evidence="1">
    <location>
        <begin position="256"/>
        <end position="257"/>
    </location>
    <ligand>
        <name>FMN</name>
        <dbReference type="ChEBI" id="CHEBI:58210"/>
    </ligand>
</feature>
<feature type="binding site" evidence="1">
    <location>
        <position position="300"/>
    </location>
    <ligand>
        <name>FMN</name>
        <dbReference type="ChEBI" id="CHEBI:58210"/>
    </ligand>
</feature>
<feature type="binding site" evidence="1">
    <location>
        <begin position="315"/>
        <end position="319"/>
    </location>
    <ligand>
        <name>FMN</name>
        <dbReference type="ChEBI" id="CHEBI:58210"/>
    </ligand>
</feature>
<feature type="binding site" evidence="1">
    <location>
        <position position="341"/>
    </location>
    <ligand>
        <name>FMN</name>
        <dbReference type="ChEBI" id="CHEBI:58210"/>
    </ligand>
</feature>
<keyword id="KW-0028">Amino-acid biosynthesis</keyword>
<keyword id="KW-0057">Aromatic amino acid biosynthesis</keyword>
<keyword id="KW-0274">FAD</keyword>
<keyword id="KW-0285">Flavoprotein</keyword>
<keyword id="KW-0288">FMN</keyword>
<keyword id="KW-0456">Lyase</keyword>
<keyword id="KW-0521">NADP</keyword>
<name>AROC_RHOJR</name>
<comment type="function">
    <text evidence="1">Catalyzes the anti-1,4-elimination of the C-3 phosphate and the C-6 proR hydrogen from 5-enolpyruvylshikimate-3-phosphate (EPSP) to yield chorismate, which is the branch point compound that serves as the starting substrate for the three terminal pathways of aromatic amino acid biosynthesis. This reaction introduces a second double bond into the aromatic ring system.</text>
</comment>
<comment type="catalytic activity">
    <reaction evidence="1">
        <text>5-O-(1-carboxyvinyl)-3-phosphoshikimate = chorismate + phosphate</text>
        <dbReference type="Rhea" id="RHEA:21020"/>
        <dbReference type="ChEBI" id="CHEBI:29748"/>
        <dbReference type="ChEBI" id="CHEBI:43474"/>
        <dbReference type="ChEBI" id="CHEBI:57701"/>
        <dbReference type="EC" id="4.2.3.5"/>
    </reaction>
</comment>
<comment type="cofactor">
    <cofactor evidence="1">
        <name>FMNH2</name>
        <dbReference type="ChEBI" id="CHEBI:57618"/>
    </cofactor>
    <text evidence="1">Reduced FMN (FMNH(2)).</text>
</comment>
<comment type="pathway">
    <text evidence="1">Metabolic intermediate biosynthesis; chorismate biosynthesis; chorismate from D-erythrose 4-phosphate and phosphoenolpyruvate: step 7/7.</text>
</comment>
<comment type="subunit">
    <text evidence="1">Homotetramer.</text>
</comment>
<comment type="similarity">
    <text evidence="1">Belongs to the chorismate synthase family.</text>
</comment>
<evidence type="ECO:0000255" key="1">
    <source>
        <dbReference type="HAMAP-Rule" id="MF_00300"/>
    </source>
</evidence>
<evidence type="ECO:0000256" key="2">
    <source>
        <dbReference type="SAM" id="MobiDB-lite"/>
    </source>
</evidence>
<sequence length="395" mass="41378">MLRWITAGESHGPALVAMLEGMVAGVEVTSEDISTQLARRRLGYGRGARMKFEADKVTIVGGVRHGRTLGGPIAVEVGNTEWPKWETIMSADPVDAELLADQARNAPLTRPRPGHADYSGMLKYGFDDARPVLERASARETAARVAAATFARSFLRQVFGVEVLSHVISIGASDPYVGPEPTASDLAAIDASPVRAFDKAAEESMIAEIEAAKRDGDTLGGVVEVVIHGLPVGLGSFISGADRLDARLASALMGIQAIKGVEVGDGFETARRRGSQAHDEMRPGPDGILRSTNRAGGLEGGMTNGEALRVRAAMKPISTVPRALATVDMSTGEEAVAIHQRSDVCAVPAAGVVAEAMVALVVAQAALEKFGGDSVAETTANYERYASGVAARLAR</sequence>
<gene>
    <name evidence="1" type="primary">aroC</name>
    <name type="ordered locus">RHA1_ro07140</name>
</gene>
<accession>Q0S0N2</accession>
<proteinExistence type="inferred from homology"/>
<protein>
    <recommendedName>
        <fullName evidence="1">Chorismate synthase</fullName>
        <shortName evidence="1">CS</shortName>
        <ecNumber evidence="1">4.2.3.5</ecNumber>
    </recommendedName>
    <alternativeName>
        <fullName evidence="1">5-enolpyruvylshikimate-3-phosphate phospholyase</fullName>
    </alternativeName>
</protein>
<organism>
    <name type="scientific">Rhodococcus jostii (strain RHA1)</name>
    <dbReference type="NCBI Taxonomy" id="101510"/>
    <lineage>
        <taxon>Bacteria</taxon>
        <taxon>Bacillati</taxon>
        <taxon>Actinomycetota</taxon>
        <taxon>Actinomycetes</taxon>
        <taxon>Mycobacteriales</taxon>
        <taxon>Nocardiaceae</taxon>
        <taxon>Rhodococcus</taxon>
    </lineage>
</organism>
<dbReference type="EC" id="4.2.3.5" evidence="1"/>
<dbReference type="EMBL" id="CP000431">
    <property type="protein sequence ID" value="ABG98904.1"/>
    <property type="molecule type" value="Genomic_DNA"/>
</dbReference>
<dbReference type="RefSeq" id="WP_009480413.1">
    <property type="nucleotide sequence ID" value="NC_008268.1"/>
</dbReference>
<dbReference type="SMR" id="Q0S0N2"/>
<dbReference type="KEGG" id="rha:RHA1_ro07140"/>
<dbReference type="eggNOG" id="COG0082">
    <property type="taxonomic scope" value="Bacteria"/>
</dbReference>
<dbReference type="HOGENOM" id="CLU_034547_2_0_11"/>
<dbReference type="OrthoDB" id="9771806at2"/>
<dbReference type="UniPathway" id="UPA00053">
    <property type="reaction ID" value="UER00090"/>
</dbReference>
<dbReference type="Proteomes" id="UP000008710">
    <property type="component" value="Chromosome"/>
</dbReference>
<dbReference type="GO" id="GO:0005829">
    <property type="term" value="C:cytosol"/>
    <property type="evidence" value="ECO:0007669"/>
    <property type="project" value="TreeGrafter"/>
</dbReference>
<dbReference type="GO" id="GO:0004107">
    <property type="term" value="F:chorismate synthase activity"/>
    <property type="evidence" value="ECO:0007669"/>
    <property type="project" value="UniProtKB-UniRule"/>
</dbReference>
<dbReference type="GO" id="GO:0010181">
    <property type="term" value="F:FMN binding"/>
    <property type="evidence" value="ECO:0007669"/>
    <property type="project" value="TreeGrafter"/>
</dbReference>
<dbReference type="GO" id="GO:0008652">
    <property type="term" value="P:amino acid biosynthetic process"/>
    <property type="evidence" value="ECO:0007669"/>
    <property type="project" value="UniProtKB-KW"/>
</dbReference>
<dbReference type="GO" id="GO:0009073">
    <property type="term" value="P:aromatic amino acid family biosynthetic process"/>
    <property type="evidence" value="ECO:0007669"/>
    <property type="project" value="UniProtKB-KW"/>
</dbReference>
<dbReference type="GO" id="GO:0009423">
    <property type="term" value="P:chorismate biosynthetic process"/>
    <property type="evidence" value="ECO:0007669"/>
    <property type="project" value="UniProtKB-UniRule"/>
</dbReference>
<dbReference type="CDD" id="cd07304">
    <property type="entry name" value="Chorismate_synthase"/>
    <property type="match status" value="1"/>
</dbReference>
<dbReference type="FunFam" id="3.60.150.10:FF:000002">
    <property type="entry name" value="Chorismate synthase"/>
    <property type="match status" value="1"/>
</dbReference>
<dbReference type="Gene3D" id="3.60.150.10">
    <property type="entry name" value="Chorismate synthase AroC"/>
    <property type="match status" value="1"/>
</dbReference>
<dbReference type="HAMAP" id="MF_00300">
    <property type="entry name" value="Chorismate_synth"/>
    <property type="match status" value="1"/>
</dbReference>
<dbReference type="InterPro" id="IPR000453">
    <property type="entry name" value="Chorismate_synth"/>
</dbReference>
<dbReference type="InterPro" id="IPR035904">
    <property type="entry name" value="Chorismate_synth_AroC_sf"/>
</dbReference>
<dbReference type="InterPro" id="IPR020541">
    <property type="entry name" value="Chorismate_synthase_CS"/>
</dbReference>
<dbReference type="NCBIfam" id="TIGR00033">
    <property type="entry name" value="aroC"/>
    <property type="match status" value="1"/>
</dbReference>
<dbReference type="NCBIfam" id="NF003793">
    <property type="entry name" value="PRK05382.1"/>
    <property type="match status" value="1"/>
</dbReference>
<dbReference type="PANTHER" id="PTHR21085">
    <property type="entry name" value="CHORISMATE SYNTHASE"/>
    <property type="match status" value="1"/>
</dbReference>
<dbReference type="PANTHER" id="PTHR21085:SF0">
    <property type="entry name" value="CHORISMATE SYNTHASE"/>
    <property type="match status" value="1"/>
</dbReference>
<dbReference type="Pfam" id="PF01264">
    <property type="entry name" value="Chorismate_synt"/>
    <property type="match status" value="1"/>
</dbReference>
<dbReference type="PIRSF" id="PIRSF001456">
    <property type="entry name" value="Chorismate_synth"/>
    <property type="match status" value="1"/>
</dbReference>
<dbReference type="SUPFAM" id="SSF103263">
    <property type="entry name" value="Chorismate synthase, AroC"/>
    <property type="match status" value="1"/>
</dbReference>
<dbReference type="PROSITE" id="PS00787">
    <property type="entry name" value="CHORISMATE_SYNTHASE_1"/>
    <property type="match status" value="1"/>
</dbReference>
<dbReference type="PROSITE" id="PS00788">
    <property type="entry name" value="CHORISMATE_SYNTHASE_2"/>
    <property type="match status" value="1"/>
</dbReference>
<dbReference type="PROSITE" id="PS00789">
    <property type="entry name" value="CHORISMATE_SYNTHASE_3"/>
    <property type="match status" value="1"/>
</dbReference>